<gene>
    <name type="ordered locus">Daro_4202</name>
</gene>
<name>YIDD_DECAR</name>
<feature type="chain" id="PRO_0000253102" description="Putative membrane protein insertion efficiency factor">
    <location>
        <begin position="1"/>
        <end position="69"/>
    </location>
</feature>
<proteinExistence type="inferred from homology"/>
<protein>
    <recommendedName>
        <fullName evidence="1">Putative membrane protein insertion efficiency factor</fullName>
    </recommendedName>
</protein>
<sequence>MKYLLIALVRGYQYAISPFLGRSCRYVPTCSEYMVDAVQKHGAFRGGWLGVKRVCRCHPWHPGGYDPVP</sequence>
<evidence type="ECO:0000255" key="1">
    <source>
        <dbReference type="HAMAP-Rule" id="MF_00386"/>
    </source>
</evidence>
<comment type="function">
    <text evidence="1">Could be involved in insertion of integral membrane proteins into the membrane.</text>
</comment>
<comment type="subcellular location">
    <subcellularLocation>
        <location evidence="1">Cell inner membrane</location>
        <topology evidence="1">Peripheral membrane protein</topology>
        <orientation evidence="1">Cytoplasmic side</orientation>
    </subcellularLocation>
</comment>
<comment type="similarity">
    <text evidence="1">Belongs to the UPF0161 family.</text>
</comment>
<accession>Q477Q3</accession>
<reference key="1">
    <citation type="journal article" date="2009" name="BMC Genomics">
        <title>Metabolic analysis of the soil microbe Dechloromonas aromatica str. RCB: indications of a surprisingly complex life-style and cryptic anaerobic pathways for aromatic degradation.</title>
        <authorList>
            <person name="Salinero K.K."/>
            <person name="Keller K."/>
            <person name="Feil W.S."/>
            <person name="Feil H."/>
            <person name="Trong S."/>
            <person name="Di Bartolo G."/>
            <person name="Lapidus A."/>
        </authorList>
    </citation>
    <scope>NUCLEOTIDE SEQUENCE [LARGE SCALE GENOMIC DNA]</scope>
    <source>
        <strain>RCB</strain>
    </source>
</reference>
<organism>
    <name type="scientific">Dechloromonas aromatica (strain RCB)</name>
    <dbReference type="NCBI Taxonomy" id="159087"/>
    <lineage>
        <taxon>Bacteria</taxon>
        <taxon>Pseudomonadati</taxon>
        <taxon>Pseudomonadota</taxon>
        <taxon>Betaproteobacteria</taxon>
        <taxon>Rhodocyclales</taxon>
        <taxon>Azonexaceae</taxon>
        <taxon>Dechloromonas</taxon>
    </lineage>
</organism>
<dbReference type="EMBL" id="CP000089">
    <property type="protein sequence ID" value="AAZ48928.1"/>
    <property type="molecule type" value="Genomic_DNA"/>
</dbReference>
<dbReference type="STRING" id="159087.Daro_4202"/>
<dbReference type="KEGG" id="dar:Daro_4202"/>
<dbReference type="eggNOG" id="COG0759">
    <property type="taxonomic scope" value="Bacteria"/>
</dbReference>
<dbReference type="HOGENOM" id="CLU_144811_6_1_4"/>
<dbReference type="OrthoDB" id="9801753at2"/>
<dbReference type="GO" id="GO:0005886">
    <property type="term" value="C:plasma membrane"/>
    <property type="evidence" value="ECO:0007669"/>
    <property type="project" value="UniProtKB-SubCell"/>
</dbReference>
<dbReference type="HAMAP" id="MF_00386">
    <property type="entry name" value="UPF0161_YidD"/>
    <property type="match status" value="1"/>
</dbReference>
<dbReference type="InterPro" id="IPR002696">
    <property type="entry name" value="Membr_insert_effic_factor_YidD"/>
</dbReference>
<dbReference type="NCBIfam" id="TIGR00278">
    <property type="entry name" value="membrane protein insertion efficiency factor YidD"/>
    <property type="match status" value="1"/>
</dbReference>
<dbReference type="PANTHER" id="PTHR33383">
    <property type="entry name" value="MEMBRANE PROTEIN INSERTION EFFICIENCY FACTOR-RELATED"/>
    <property type="match status" value="1"/>
</dbReference>
<dbReference type="PANTHER" id="PTHR33383:SF1">
    <property type="entry name" value="MEMBRANE PROTEIN INSERTION EFFICIENCY FACTOR-RELATED"/>
    <property type="match status" value="1"/>
</dbReference>
<dbReference type="Pfam" id="PF01809">
    <property type="entry name" value="YidD"/>
    <property type="match status" value="1"/>
</dbReference>
<dbReference type="SMART" id="SM01234">
    <property type="entry name" value="Haemolytic"/>
    <property type="match status" value="1"/>
</dbReference>
<keyword id="KW-0997">Cell inner membrane</keyword>
<keyword id="KW-1003">Cell membrane</keyword>
<keyword id="KW-0472">Membrane</keyword>